<feature type="chain" id="PRO_0000259162" description="Isocitrate dehydrogenase kinase/phosphatase">
    <location>
        <begin position="1"/>
        <end position="575"/>
    </location>
</feature>
<feature type="active site" evidence="1">
    <location>
        <position position="371"/>
    </location>
</feature>
<feature type="binding site" evidence="1">
    <location>
        <begin position="315"/>
        <end position="321"/>
    </location>
    <ligand>
        <name>ATP</name>
        <dbReference type="ChEBI" id="CHEBI:30616"/>
    </ligand>
</feature>
<feature type="binding site" evidence="1">
    <location>
        <position position="336"/>
    </location>
    <ligand>
        <name>ATP</name>
        <dbReference type="ChEBI" id="CHEBI:30616"/>
    </ligand>
</feature>
<evidence type="ECO:0000255" key="1">
    <source>
        <dbReference type="HAMAP-Rule" id="MF_00747"/>
    </source>
</evidence>
<organism>
    <name type="scientific">Yersinia pestis bv. Antiqua (strain Nepal516)</name>
    <dbReference type="NCBI Taxonomy" id="377628"/>
    <lineage>
        <taxon>Bacteria</taxon>
        <taxon>Pseudomonadati</taxon>
        <taxon>Pseudomonadota</taxon>
        <taxon>Gammaproteobacteria</taxon>
        <taxon>Enterobacterales</taxon>
        <taxon>Yersiniaceae</taxon>
        <taxon>Yersinia</taxon>
    </lineage>
</organism>
<keyword id="KW-0067">ATP-binding</keyword>
<keyword id="KW-0963">Cytoplasm</keyword>
<keyword id="KW-0329">Glyoxylate bypass</keyword>
<keyword id="KW-0378">Hydrolase</keyword>
<keyword id="KW-0418">Kinase</keyword>
<keyword id="KW-0547">Nucleotide-binding</keyword>
<keyword id="KW-0904">Protein phosphatase</keyword>
<keyword id="KW-0723">Serine/threonine-protein kinase</keyword>
<keyword id="KW-0808">Transferase</keyword>
<keyword id="KW-0816">Tricarboxylic acid cycle</keyword>
<comment type="function">
    <text evidence="1">Bifunctional enzyme which can phosphorylate or dephosphorylate isocitrate dehydrogenase (IDH) on a specific serine residue. This is a regulatory mechanism which enables bacteria to bypass the Krebs cycle via the glyoxylate shunt in response to the source of carbon. When bacteria are grown on glucose, IDH is fully active and unphosphorylated, but when grown on acetate or ethanol, the activity of IDH declines drastically concomitant with its phosphorylation.</text>
</comment>
<comment type="catalytic activity">
    <reaction evidence="1">
        <text>L-seryl-[isocitrate dehydrogenase] + ATP = O-phospho-L-seryl-[isocitrate dehydrogenase] + ADP + H(+)</text>
        <dbReference type="Rhea" id="RHEA:43540"/>
        <dbReference type="Rhea" id="RHEA-COMP:10605"/>
        <dbReference type="Rhea" id="RHEA-COMP:10606"/>
        <dbReference type="ChEBI" id="CHEBI:15378"/>
        <dbReference type="ChEBI" id="CHEBI:29999"/>
        <dbReference type="ChEBI" id="CHEBI:30616"/>
        <dbReference type="ChEBI" id="CHEBI:83421"/>
        <dbReference type="ChEBI" id="CHEBI:456216"/>
        <dbReference type="EC" id="2.7.11.5"/>
    </reaction>
</comment>
<comment type="subcellular location">
    <subcellularLocation>
        <location evidence="1">Cytoplasm</location>
    </subcellularLocation>
</comment>
<comment type="similarity">
    <text evidence="1">Belongs to the AceK family.</text>
</comment>
<proteinExistence type="inferred from homology"/>
<dbReference type="EC" id="2.7.11.5" evidence="1"/>
<dbReference type="EC" id="3.1.3.-" evidence="1"/>
<dbReference type="EMBL" id="CP000305">
    <property type="protein sequence ID" value="ABG16349.1"/>
    <property type="molecule type" value="Genomic_DNA"/>
</dbReference>
<dbReference type="EMBL" id="ACNQ01000019">
    <property type="protein sequence ID" value="EEO74933.1"/>
    <property type="molecule type" value="Genomic_DNA"/>
</dbReference>
<dbReference type="RefSeq" id="WP_002212079.1">
    <property type="nucleotide sequence ID" value="NZ_ACNQ01000019.1"/>
</dbReference>
<dbReference type="SMR" id="Q1CNT1"/>
<dbReference type="GeneID" id="57974998"/>
<dbReference type="KEGG" id="ypn:YPN_0016"/>
<dbReference type="HOGENOM" id="CLU_033804_1_1_6"/>
<dbReference type="Proteomes" id="UP000008936">
    <property type="component" value="Chromosome"/>
</dbReference>
<dbReference type="GO" id="GO:0005737">
    <property type="term" value="C:cytoplasm"/>
    <property type="evidence" value="ECO:0007669"/>
    <property type="project" value="UniProtKB-SubCell"/>
</dbReference>
<dbReference type="GO" id="GO:0008772">
    <property type="term" value="F:[isocitrate dehydrogenase (NADP+)] kinase activity"/>
    <property type="evidence" value="ECO:0007669"/>
    <property type="project" value="UniProtKB-UniRule"/>
</dbReference>
<dbReference type="GO" id="GO:0016208">
    <property type="term" value="F:AMP binding"/>
    <property type="evidence" value="ECO:0007669"/>
    <property type="project" value="TreeGrafter"/>
</dbReference>
<dbReference type="GO" id="GO:0005524">
    <property type="term" value="F:ATP binding"/>
    <property type="evidence" value="ECO:0007669"/>
    <property type="project" value="UniProtKB-UniRule"/>
</dbReference>
<dbReference type="GO" id="GO:0004721">
    <property type="term" value="F:phosphoprotein phosphatase activity"/>
    <property type="evidence" value="ECO:0007669"/>
    <property type="project" value="UniProtKB-KW"/>
</dbReference>
<dbReference type="GO" id="GO:0004674">
    <property type="term" value="F:protein serine/threonine kinase activity"/>
    <property type="evidence" value="ECO:0007669"/>
    <property type="project" value="UniProtKB-KW"/>
</dbReference>
<dbReference type="GO" id="GO:0006006">
    <property type="term" value="P:glucose metabolic process"/>
    <property type="evidence" value="ECO:0007669"/>
    <property type="project" value="InterPro"/>
</dbReference>
<dbReference type="GO" id="GO:0006097">
    <property type="term" value="P:glyoxylate cycle"/>
    <property type="evidence" value="ECO:0007669"/>
    <property type="project" value="UniProtKB-UniRule"/>
</dbReference>
<dbReference type="GO" id="GO:0006099">
    <property type="term" value="P:tricarboxylic acid cycle"/>
    <property type="evidence" value="ECO:0007669"/>
    <property type="project" value="UniProtKB-UniRule"/>
</dbReference>
<dbReference type="HAMAP" id="MF_00747">
    <property type="entry name" value="AceK"/>
    <property type="match status" value="1"/>
</dbReference>
<dbReference type="InterPro" id="IPR046855">
    <property type="entry name" value="AceK_kinase"/>
</dbReference>
<dbReference type="InterPro" id="IPR046854">
    <property type="entry name" value="AceK_regulatory"/>
</dbReference>
<dbReference type="InterPro" id="IPR010452">
    <property type="entry name" value="Isocitrate_DH_AceK"/>
</dbReference>
<dbReference type="NCBIfam" id="NF002804">
    <property type="entry name" value="PRK02946.1"/>
    <property type="match status" value="1"/>
</dbReference>
<dbReference type="PANTHER" id="PTHR39559">
    <property type="match status" value="1"/>
</dbReference>
<dbReference type="PANTHER" id="PTHR39559:SF1">
    <property type="entry name" value="ISOCITRATE DEHYDROGENASE KINASE_PHOSPHATASE"/>
    <property type="match status" value="1"/>
</dbReference>
<dbReference type="Pfam" id="PF06315">
    <property type="entry name" value="AceK_kinase"/>
    <property type="match status" value="1"/>
</dbReference>
<dbReference type="Pfam" id="PF20423">
    <property type="entry name" value="AceK_regulatory"/>
    <property type="match status" value="1"/>
</dbReference>
<dbReference type="PIRSF" id="PIRSF000719">
    <property type="entry name" value="AceK"/>
    <property type="match status" value="1"/>
</dbReference>
<sequence length="575" mass="67622">MVAKLEQLIAQTILQGFDAQYGRFLEVTAGAQHRFEQADWHAVQQAMKKRIHLYDHHVGLVVEQLKYITDQRHFDVEFLARVKEIYTGLLPDYPRFEIAESFFNSVYCRLFKHRDLTPDKLFVFSSQPERRFREIPRPLARDFIPKGDLSGMLQMVLNDLSLRLHWENLSRDIDYIVMAIRQAFTDEQLASAHFQIANELFYRNKAAWLVGKLRLNGDIYPFLLPIHHNESGELFIDTCLTSKAEASIVFGFARSYFMVYVPLPAAMVEWLREILPGKSTAELYTAIGCQKHGKTESYREYLAFIHQSSEQFIIAPGVKGMVMLVFTLPSFDRVFKVIKDQFAPQKEVTQARVLECYQLVKEHDRVGRMADTQEYENFVIDKHRISPELLAELQHEVPEKLEDLGDKIVIKHLYMERRMTPLNLYMEQADDQQLKDAIEEYGNAIKQLAAANIFPGDMLFKNFGVTRHGRVVFYDYDEICYMTEVNFRDIPPPRYPEDEMASEPWYSVSPNDVFPEEFRHFLCSDRKVRHFFEEMHGDLFQASYWRGLQQRIRDGHVEDVFAYRRKQRFSQRALN</sequence>
<reference key="1">
    <citation type="journal article" date="2006" name="J. Bacteriol.">
        <title>Complete genome sequence of Yersinia pestis strains Antiqua and Nepal516: evidence of gene reduction in an emerging pathogen.</title>
        <authorList>
            <person name="Chain P.S.G."/>
            <person name="Hu P."/>
            <person name="Malfatti S.A."/>
            <person name="Radnedge L."/>
            <person name="Larimer F."/>
            <person name="Vergez L.M."/>
            <person name="Worsham P."/>
            <person name="Chu M.C."/>
            <person name="Andersen G.L."/>
        </authorList>
    </citation>
    <scope>NUCLEOTIDE SEQUENCE [LARGE SCALE GENOMIC DNA]</scope>
    <source>
        <strain>Nepal516</strain>
    </source>
</reference>
<reference key="2">
    <citation type="submission" date="2009-04" db="EMBL/GenBank/DDBJ databases">
        <title>Yersinia pestis Nepal516A whole genome shotgun sequencing project.</title>
        <authorList>
            <person name="Plunkett G. III"/>
            <person name="Anderson B.D."/>
            <person name="Baumler D.J."/>
            <person name="Burland V."/>
            <person name="Cabot E.L."/>
            <person name="Glasner J.D."/>
            <person name="Mau B."/>
            <person name="Neeno-Eckwall E."/>
            <person name="Perna N.T."/>
            <person name="Munk A.C."/>
            <person name="Tapia R."/>
            <person name="Green L.D."/>
            <person name="Rogers Y.C."/>
            <person name="Detter J.C."/>
            <person name="Bruce D.C."/>
            <person name="Brettin T.S."/>
        </authorList>
    </citation>
    <scope>NUCLEOTIDE SEQUENCE [LARGE SCALE GENOMIC DNA]</scope>
    <source>
        <strain>Nepal516</strain>
    </source>
</reference>
<name>ACEK_YERPN</name>
<gene>
    <name evidence="1" type="primary">aceK</name>
    <name type="ordered locus">YPN_0016</name>
    <name type="ORF">YP516_4550</name>
</gene>
<accession>Q1CNT1</accession>
<accession>D1Q330</accession>
<protein>
    <recommendedName>
        <fullName evidence="1">Isocitrate dehydrogenase kinase/phosphatase</fullName>
        <shortName evidence="1">IDH kinase/phosphatase</shortName>
        <shortName evidence="1">IDHK/P</shortName>
        <ecNumber evidence="1">2.7.11.5</ecNumber>
        <ecNumber evidence="1">3.1.3.-</ecNumber>
    </recommendedName>
</protein>